<name>GCNT3_BHV4D</name>
<keyword id="KW-1015">Disulfide bond</keyword>
<keyword id="KW-0325">Glycoprotein</keyword>
<keyword id="KW-0328">Glycosyltransferase</keyword>
<keyword id="KW-1040">Host Golgi apparatus</keyword>
<keyword id="KW-1043">Host membrane</keyword>
<keyword id="KW-0472">Membrane</keyword>
<keyword id="KW-1185">Reference proteome</keyword>
<keyword id="KW-0735">Signal-anchor</keyword>
<keyword id="KW-0808">Transferase</keyword>
<keyword id="KW-0812">Transmembrane</keyword>
<keyword id="KW-1133">Transmembrane helix</keyword>
<accession>Q99CW3</accession>
<sequence>MKMAGWKKKLCRGHHLWALGCYMLLAVVSLRLSLRFKCDVDSLDLESRDFQSQHCRDMLYNSLKLPAKRSINCSGITRGDQEAVVQALLDNLEVKKKRSPLTGTYYLNITRDCERFKAQRKFIQFPLSKEELDFPIAYSMVVHEKIENFERLLRAVYAPQNIYCVHVDVKSPETFKEAVKAIISCFPNVFMASKLVPVVYASWSRVQADLNCMEDLLQSSVPWKYLLNTCGTDFPIKTNAEMVLALKMLKGKNSMESEVPSESKKNRWKYRYEVTDTLYPTSKMKDPPPDNLPMFTGNAYFVASRAFVQHVLDNPKSQRLVEWVKDTYSPDEHLWATLQRAPWMPGSVPSHPKYHISDMTAIARLVKWQYHEGDVSMGAPYAPCSGIHRRAICIYGAGDLYWILQNHHLLANKFDPRVDDNVLQCLEEYLRHKAIYGTEL</sequence>
<proteinExistence type="evidence at protein level"/>
<gene>
    <name type="primary">Bo17</name>
</gene>
<reference key="1">
    <citation type="journal article" date="2001" name="J. Virol.">
        <title>Genome sequence of bovine herpesvirus 4, a bovine Rhadinovirus, and identification of an origin of DNA replication.</title>
        <authorList>
            <person name="Zimmermann W."/>
            <person name="Broll H."/>
            <person name="Ehlers B."/>
            <person name="Buhk H.-J."/>
            <person name="Rosenthal A."/>
            <person name="Goltz M."/>
        </authorList>
    </citation>
    <scope>NUCLEOTIDE SEQUENCE [GENOMIC DNA]</scope>
</reference>
<reference key="2">
    <citation type="journal article" date="2003" name="J. Virol.">
        <title>The core 2 beta-1,6-N-acetylglucosaminyltransferase-mucin encoded by bovine herpesvirus 4 was acquired from an ancestor of the African buffalo.</title>
        <authorList>
            <person name="Markine-Goriaynoff N."/>
            <person name="Georgin J.-P."/>
            <person name="Goltz M."/>
            <person name="Zimmermann W."/>
            <person name="Broll H."/>
            <person name="Wamwayi H.M."/>
            <person name="Pastoret P.-P."/>
            <person name="Sharp P.M."/>
            <person name="Vanderplasschen A."/>
        </authorList>
    </citation>
    <scope>NUCLEOTIDE SEQUENCE [GENOMIC DNA]</scope>
</reference>
<protein>
    <recommendedName>
        <fullName>Beta-1,3-galactosyl-O-glycosyl-glycoprotein beta-1,6-N-acetylglucosaminyltransferase</fullName>
        <ecNumber evidence="2">2.4.1.102</ecNumber>
        <ecNumber evidence="2">2.4.1.148</ecNumber>
        <ecNumber evidence="2">2.4.1.150</ecNumber>
    </recommendedName>
    <alternativeName>
        <fullName>C2GnT-mucin type</fullName>
        <shortName>C2GnT-M</shortName>
    </alternativeName>
</protein>
<evidence type="ECO:0000250" key="1"/>
<evidence type="ECO:0000250" key="2">
    <source>
        <dbReference type="UniProtKB" id="Q9IZK2"/>
    </source>
</evidence>
<evidence type="ECO:0000255" key="3"/>
<evidence type="ECO:0000305" key="4"/>
<comment type="function">
    <text>Non-essential glycosyltransferase that can synthesize all known mucin beta 6 N-acetylglucosaminides. Mediates core 2 and core 4 O-glycan branching, 2 important steps in mucin-type biosynthesis. Has also I-branching enzyme activity by converting linear into branched poly-N-acetyllactosaminoglycans. Contributes to the post-translational modifications of structural proteins.</text>
</comment>
<comment type="catalytic activity">
    <reaction evidence="2">
        <text>a 3-O-[beta-D-galactosyl-(1-&gt;3)-N-acetyl-alpha-D-galactosaminyl]-L-seryl-[protein] + UDP-N-acetyl-alpha-D-glucosamine = 3-O-{beta-D-galactosyl-(1-&gt;3)-[N-acetyl-beta-D-glucosaminyl-(1-&gt;6)]-N-acetyl-alpha-D-galactosaminyl}-L-seryl-[protein] + UDP + H(+)</text>
        <dbReference type="Rhea" id="RHEA:56212"/>
        <dbReference type="Rhea" id="RHEA-COMP:13922"/>
        <dbReference type="Rhea" id="RHEA-COMP:14419"/>
        <dbReference type="ChEBI" id="CHEBI:15378"/>
        <dbReference type="ChEBI" id="CHEBI:57705"/>
        <dbReference type="ChEBI" id="CHEBI:58223"/>
        <dbReference type="ChEBI" id="CHEBI:137949"/>
        <dbReference type="ChEBI" id="CHEBI:139605"/>
        <dbReference type="EC" id="2.4.1.102"/>
    </reaction>
</comment>
<comment type="catalytic activity">
    <reaction evidence="2">
        <text>a 3-O-[beta-D-galactosyl-(1-&gt;3)-N-acetyl-alpha-D-galactosaminyl]-L-threonyl-[protein] + UDP-N-acetyl-alpha-D-glucosamine = a 3-O-{beta-D-galactosyl-(1-&gt;3)-[N-acetyl-beta-D-glucosaminyl-(1-&gt;6)]-N-acetyl-alpha-D-galactosaminyl}-L-threonyl-[protein] + UDP + H(+)</text>
        <dbReference type="Rhea" id="RHEA:56216"/>
        <dbReference type="Rhea" id="RHEA-COMP:13923"/>
        <dbReference type="Rhea" id="RHEA-COMP:14420"/>
        <dbReference type="ChEBI" id="CHEBI:15378"/>
        <dbReference type="ChEBI" id="CHEBI:57705"/>
        <dbReference type="ChEBI" id="CHEBI:58223"/>
        <dbReference type="ChEBI" id="CHEBI:137950"/>
        <dbReference type="ChEBI" id="CHEBI:139607"/>
        <dbReference type="EC" id="2.4.1.102"/>
    </reaction>
</comment>
<comment type="catalytic activity">
    <reaction evidence="2">
        <text>a beta-D-Gal-(1-&gt;4)-beta-D-GlcNAc-(1-&gt;3)-beta-D-Gal-(1-&gt;4)-beta-D-GlcNAc derivative + UDP-N-acetyl-alpha-D-glucosamine = a beta-D-Gal-(1-&gt;4)-beta-D-GlcNAc-(1-&gt;3)-[beta-D-GlcNAc-(1-&gt;6)]-beta-D-Gal-(1-&gt;4)-N-acetyl-beta-D-glucosaminyl derivative + UDP + H(+)</text>
        <dbReference type="Rhea" id="RHEA:54820"/>
        <dbReference type="ChEBI" id="CHEBI:15378"/>
        <dbReference type="ChEBI" id="CHEBI:57705"/>
        <dbReference type="ChEBI" id="CHEBI:58223"/>
        <dbReference type="ChEBI" id="CHEBI:138371"/>
        <dbReference type="ChEBI" id="CHEBI:138372"/>
        <dbReference type="EC" id="2.4.1.150"/>
    </reaction>
</comment>
<comment type="catalytic activity">
    <reaction evidence="2">
        <text>3-O-[N-acetyl-beta-D-glucosaminyl-(1-&gt;3)-N-acetyl-alpha-D-galactosaminyl]-L-seryl-[protein] + UDP-N-acetyl-alpha-D-glucosamine = 3-O-[N-acetyl-beta-D-glucosaminyl-(1-&gt;3)-[N-acetyl-beta-D-glucosaminyl-(1-&gt;6)]-N-acetyl-alpha-D-galactosaminyl]-L-seryl-[protein] + UDP + H(+)</text>
        <dbReference type="Rhea" id="RHEA:56188"/>
        <dbReference type="Rhea" id="RHEA-COMP:11691"/>
        <dbReference type="Rhea" id="RHEA-COMP:14412"/>
        <dbReference type="ChEBI" id="CHEBI:15378"/>
        <dbReference type="ChEBI" id="CHEBI:57705"/>
        <dbReference type="ChEBI" id="CHEBI:58223"/>
        <dbReference type="ChEBI" id="CHEBI:87079"/>
        <dbReference type="ChEBI" id="CHEBI:139581"/>
        <dbReference type="EC" id="2.4.1.148"/>
    </reaction>
</comment>
<comment type="catalytic activity">
    <reaction evidence="2">
        <text>a 3-O-[N-acetyl-beta-D-glucosaminyl-(1-&gt;3)-N-acetyl-alpha-D-galactosaminyl]-L-threonyl-[protein] + UDP-N-acetyl-alpha-D-glucosamine = 3-O-[N-acetyl-beta-D-glucosaminyl-(1-&gt;3)-[N-acetyl-beta-D-glucosaminyl-(1-&gt;6)]-N-acetyl-alpha-D-galactosaminyl]-L-threonyl-[protein] + UDP + H(+)</text>
        <dbReference type="Rhea" id="RHEA:56192"/>
        <dbReference type="Rhea" id="RHEA-COMP:11692"/>
        <dbReference type="Rhea" id="RHEA-COMP:14413"/>
        <dbReference type="ChEBI" id="CHEBI:15378"/>
        <dbReference type="ChEBI" id="CHEBI:57705"/>
        <dbReference type="ChEBI" id="CHEBI:58223"/>
        <dbReference type="ChEBI" id="CHEBI:87080"/>
        <dbReference type="ChEBI" id="CHEBI:139580"/>
        <dbReference type="EC" id="2.4.1.148"/>
    </reaction>
</comment>
<comment type="pathway">
    <text>Protein modification; protein glycosylation.</text>
</comment>
<comment type="subcellular location">
    <subcellularLocation>
        <location evidence="1">Host Golgi apparatus membrane</location>
        <topology evidence="1">Single-pass type II membrane protein</topology>
    </subcellularLocation>
</comment>
<comment type="developmental stage">
    <text>Expressed during BHV-4 replication (at protein level).</text>
</comment>
<comment type="miscellaneous">
    <text>Was acquired from an ancestor of the African buffalo around 1.5 million years ago.</text>
</comment>
<comment type="similarity">
    <text evidence="4">Belongs to the glycosyltransferase 14 family.</text>
</comment>
<dbReference type="EC" id="2.4.1.102" evidence="2"/>
<dbReference type="EC" id="2.4.1.148" evidence="2"/>
<dbReference type="EC" id="2.4.1.150" evidence="2"/>
<dbReference type="EMBL" id="AF318573">
    <property type="protein sequence ID" value="AAK07999.1"/>
    <property type="molecule type" value="Genomic_DNA"/>
</dbReference>
<dbReference type="EMBL" id="AF465332">
    <property type="protein sequence ID" value="AAO22159.1"/>
    <property type="molecule type" value="Genomic_DNA"/>
</dbReference>
<dbReference type="RefSeq" id="NP_076572.1">
    <property type="nucleotide sequence ID" value="NC_002665.1"/>
</dbReference>
<dbReference type="SMR" id="Q99CW3"/>
<dbReference type="CAZy" id="GT14">
    <property type="family name" value="Glycosyltransferase Family 14"/>
</dbReference>
<dbReference type="GlyCosmos" id="Q99CW3">
    <property type="glycosylation" value="2 sites, No reported glycans"/>
</dbReference>
<dbReference type="KEGG" id="vg:1684881"/>
<dbReference type="UniPathway" id="UPA00378"/>
<dbReference type="Proteomes" id="UP000109731">
    <property type="component" value="Segment"/>
</dbReference>
<dbReference type="GO" id="GO:0044178">
    <property type="term" value="C:host cell Golgi membrane"/>
    <property type="evidence" value="ECO:0007669"/>
    <property type="project" value="UniProtKB-SubCell"/>
</dbReference>
<dbReference type="GO" id="GO:0016020">
    <property type="term" value="C:membrane"/>
    <property type="evidence" value="ECO:0007669"/>
    <property type="project" value="UniProtKB-KW"/>
</dbReference>
<dbReference type="GO" id="GO:0047225">
    <property type="term" value="F:acetylgalactosaminyl-O-glycosyl-glycoprotein beta-1,6-N-acetylglucosaminyltransferase activity"/>
    <property type="evidence" value="ECO:0007669"/>
    <property type="project" value="UniProtKB-EC"/>
</dbReference>
<dbReference type="GO" id="GO:0003829">
    <property type="term" value="F:beta-1,3-galactosyl-O-glycosyl-glycoprotein beta-1,6-N-acetylglucosaminyltransferase activity"/>
    <property type="evidence" value="ECO:0007669"/>
    <property type="project" value="UniProtKB-EC"/>
</dbReference>
<dbReference type="GO" id="GO:0008109">
    <property type="term" value="F:N-acetyllactosaminide beta-1,6-N-acetylglucosaminyltransferase activity"/>
    <property type="evidence" value="ECO:0007669"/>
    <property type="project" value="UniProtKB-EC"/>
</dbReference>
<dbReference type="GO" id="GO:0006486">
    <property type="term" value="P:protein glycosylation"/>
    <property type="evidence" value="ECO:0007669"/>
    <property type="project" value="UniProtKB-UniPathway"/>
</dbReference>
<dbReference type="InterPro" id="IPR003406">
    <property type="entry name" value="Glyco_trans_14"/>
</dbReference>
<dbReference type="PANTHER" id="PTHR19297:SF81">
    <property type="entry name" value="BETA-1,3-GALACTOSYL-O-GLYCOSYL-GLYCOPROTEIN BETA-1,6-N-ACETYLGLUCOSAMINYLTRANSFERASE 3"/>
    <property type="match status" value="1"/>
</dbReference>
<dbReference type="PANTHER" id="PTHR19297">
    <property type="entry name" value="GLYCOSYLTRANSFERASE 14 FAMILY MEMBER"/>
    <property type="match status" value="1"/>
</dbReference>
<dbReference type="Pfam" id="PF02485">
    <property type="entry name" value="Branch"/>
    <property type="match status" value="1"/>
</dbReference>
<organismHost>
    <name type="scientific">Bos taurus</name>
    <name type="common">Bovine</name>
    <dbReference type="NCBI Taxonomy" id="9913"/>
</organismHost>
<organismHost>
    <name type="scientific">Felis catus</name>
    <name type="common">Cat</name>
    <name type="synonym">Felis silvestris catus</name>
    <dbReference type="NCBI Taxonomy" id="9685"/>
</organismHost>
<organismHost>
    <name type="scientific">Panthera leo</name>
    <name type="common">Lion</name>
    <dbReference type="NCBI Taxonomy" id="9689"/>
</organismHost>
<feature type="chain" id="PRO_0000288552" description="Beta-1,3-galactosyl-O-glycosyl-glycoprotein beta-1,6-N-acetylglucosaminyltransferase">
    <location>
        <begin position="1"/>
        <end position="440"/>
    </location>
</feature>
<feature type="topological domain" description="Cytoplasmic" evidence="3">
    <location>
        <begin position="1"/>
        <end position="12"/>
    </location>
</feature>
<feature type="transmembrane region" description="Helical; Signal-anchor for type II membrane protein" evidence="3">
    <location>
        <begin position="13"/>
        <end position="30"/>
    </location>
</feature>
<feature type="topological domain" description="Lumenal" evidence="3">
    <location>
        <begin position="31"/>
        <end position="440"/>
    </location>
</feature>
<feature type="glycosylation site" description="N-linked (GlcNAc...) asparagine; by host" evidence="3">
    <location>
        <position position="72"/>
    </location>
</feature>
<feature type="glycosylation site" description="N-linked (GlcNAc...) asparagine; by host" evidence="3">
    <location>
        <position position="108"/>
    </location>
</feature>
<feature type="disulfide bond" evidence="1">
    <location>
        <begin position="73"/>
        <end position="230"/>
    </location>
</feature>
<feature type="disulfide bond" evidence="1">
    <location>
        <begin position="164"/>
        <end position="384"/>
    </location>
</feature>
<feature type="disulfide bond" evidence="1">
    <location>
        <begin position="185"/>
        <end position="212"/>
    </location>
</feature>
<feature type="disulfide bond" evidence="1">
    <location>
        <begin position="393"/>
        <end position="425"/>
    </location>
</feature>
<organism>
    <name type="scientific">Bovine herpesvirus 4 (strain DN-599)</name>
    <name type="common">BoHV-4</name>
    <name type="synonym">Movar virus</name>
    <dbReference type="NCBI Taxonomy" id="10355"/>
    <lineage>
        <taxon>Viruses</taxon>
        <taxon>Duplodnaviria</taxon>
        <taxon>Heunggongvirae</taxon>
        <taxon>Peploviricota</taxon>
        <taxon>Herviviricetes</taxon>
        <taxon>Herpesvirales</taxon>
        <taxon>Orthoherpesviridae</taxon>
        <taxon>Gammaherpesvirinae</taxon>
        <taxon>Rhadinovirus</taxon>
        <taxon>Rhadinovirus bovinegamma4</taxon>
    </lineage>
</organism>